<proteinExistence type="evidence at protein level"/>
<keyword id="KW-0002">3D-structure</keyword>
<keyword id="KW-0025">Alternative splicing</keyword>
<keyword id="KW-0156">Chromatin regulator</keyword>
<keyword id="KW-1017">Isopeptide bond</keyword>
<keyword id="KW-0539">Nucleus</keyword>
<keyword id="KW-0597">Phosphoprotein</keyword>
<keyword id="KW-1185">Reference proteome</keyword>
<keyword id="KW-0677">Repeat</keyword>
<keyword id="KW-0804">Transcription</keyword>
<keyword id="KW-0805">Transcription regulation</keyword>
<keyword id="KW-0832">Ubl conjugation</keyword>
<keyword id="KW-0853">WD repeat</keyword>
<sequence length="538" mass="59098">MNLELLESFGQNYPEEADGTLDCISMALTCTFNRWGTLLAVGCNDGRIVIWDFLTRGIAKIISAHIHPVCSLCWSRDGHKLVSASTDNIVSQWDVLSGDCDQRFRFPSPILKVQYHPRDQNKVLVCPMKSAPVMLTLSDSKHVVLPVDDDSDLNVVASFDRRGEYIYTGNAKGKILVLKTDSQDLVASFRVTTGTSNTTAIKSIEFARKGSCFLINTADRIIRVYDGREILTCGRDGEPEPMQKLQDLVNRTPWKKCCFSGDGEYIVAGSARQHALYIWEKSIGNLVKILHGTRGELLLDVAWHPVRPIIASISSGVVSIWAQNQVENWSAFAPDFKELDENVEYEERESEFDIEDEDKSEPEQTGADAAEDEEVDVTSVDPIAAFCSSDEELEDSKALLYLPIAPEVEDPEENPYGPPPDAVPSSLMDEGASSEKKRQSSADGSQPPKKKPKTTNIELQGVPNDEVHPLLGVKGDGKSKKKQAGRPKGSKGKEKDSPFKPKLYKGDRGLPLEGSTKGKVQAELSQSLAAGGAISELL</sequence>
<dbReference type="EMBL" id="AK049247">
    <property type="protein sequence ID" value="BAC33635.1"/>
    <property type="molecule type" value="mRNA"/>
</dbReference>
<dbReference type="EMBL" id="AK154782">
    <property type="protein sequence ID" value="BAE32825.1"/>
    <property type="molecule type" value="mRNA"/>
</dbReference>
<dbReference type="EMBL" id="AK171177">
    <property type="protein sequence ID" value="BAE42295.1"/>
    <property type="molecule type" value="mRNA"/>
</dbReference>
<dbReference type="EMBL" id="CH466520">
    <property type="protein sequence ID" value="EDL39676.1"/>
    <property type="molecule type" value="Genomic_DNA"/>
</dbReference>
<dbReference type="EMBL" id="BC057632">
    <property type="protein sequence ID" value="AAH57632.1"/>
    <property type="molecule type" value="mRNA"/>
</dbReference>
<dbReference type="EMBL" id="BC060186">
    <property type="protein sequence ID" value="AAH60186.2"/>
    <property type="molecule type" value="mRNA"/>
</dbReference>
<dbReference type="CCDS" id="CCDS15286.1">
    <molecule id="Q8BX09-1"/>
</dbReference>
<dbReference type="CCDS" id="CCDS87875.1">
    <molecule id="Q8BX09-2"/>
</dbReference>
<dbReference type="RefSeq" id="NP_001344416.1">
    <molecule id="Q8BX09-2"/>
    <property type="nucleotide sequence ID" value="NM_001357487.1"/>
</dbReference>
<dbReference type="RefSeq" id="NP_766105.2">
    <molecule id="Q8BX09-1"/>
    <property type="nucleotide sequence ID" value="NM_172517.2"/>
</dbReference>
<dbReference type="PDB" id="2XL2">
    <property type="method" value="X-ray"/>
    <property type="resolution" value="2.40 A"/>
    <property type="chains" value="C/D=369-381"/>
</dbReference>
<dbReference type="PDB" id="2XL3">
    <property type="method" value="X-ray"/>
    <property type="resolution" value="2.70 A"/>
    <property type="chains" value="C/E=369-381"/>
</dbReference>
<dbReference type="PDBsum" id="2XL2"/>
<dbReference type="PDBsum" id="2XL3"/>
<dbReference type="SMR" id="Q8BX09"/>
<dbReference type="BioGRID" id="229436">
    <property type="interactions" value="33"/>
</dbReference>
<dbReference type="DIP" id="DIP-61809N"/>
<dbReference type="FunCoup" id="Q8BX09">
    <property type="interactions" value="4265"/>
</dbReference>
<dbReference type="IntAct" id="Q8BX09">
    <property type="interactions" value="14"/>
</dbReference>
<dbReference type="MINT" id="Q8BX09"/>
<dbReference type="STRING" id="10090.ENSMUSP00000141003"/>
<dbReference type="GlyGen" id="Q8BX09">
    <property type="glycosylation" value="2 sites, 1 N-linked glycan (1 site), 1 O-linked glycan (1 site)"/>
</dbReference>
<dbReference type="iPTMnet" id="Q8BX09"/>
<dbReference type="PhosphoSitePlus" id="Q8BX09"/>
<dbReference type="SwissPalm" id="Q8BX09"/>
<dbReference type="PaxDb" id="10090-ENSMUSP00000141003"/>
<dbReference type="PeptideAtlas" id="Q8BX09"/>
<dbReference type="ProteomicsDB" id="253177">
    <molecule id="Q8BX09-1"/>
</dbReference>
<dbReference type="ProteomicsDB" id="253178">
    <molecule id="Q8BX09-2"/>
</dbReference>
<dbReference type="Pumba" id="Q8BX09"/>
<dbReference type="Antibodypedia" id="34563">
    <property type="antibodies" value="297 antibodies from 38 providers"/>
</dbReference>
<dbReference type="DNASU" id="213464"/>
<dbReference type="Ensembl" id="ENSMUST00000027700.15">
    <molecule id="Q8BX09-2"/>
    <property type="protein sequence ID" value="ENSMUSP00000027700.10"/>
    <property type="gene ID" value="ENSMUSG00000026439.15"/>
</dbReference>
<dbReference type="Ensembl" id="ENSMUST00000190997.7">
    <molecule id="Q8BX09-1"/>
    <property type="protein sequence ID" value="ENSMUSP00000141003.2"/>
    <property type="gene ID" value="ENSMUSG00000026439.15"/>
</dbReference>
<dbReference type="GeneID" id="213464"/>
<dbReference type="KEGG" id="mmu:213464"/>
<dbReference type="UCSC" id="uc007cow.2">
    <molecule id="Q8BX09-1"/>
    <property type="organism name" value="mouse"/>
</dbReference>
<dbReference type="UCSC" id="uc007coy.2">
    <molecule id="Q8BX09-2"/>
    <property type="organism name" value="mouse"/>
</dbReference>
<dbReference type="AGR" id="MGI:1918367"/>
<dbReference type="CTD" id="5929"/>
<dbReference type="MGI" id="MGI:1918367">
    <property type="gene designation" value="Rbbp5"/>
</dbReference>
<dbReference type="VEuPathDB" id="HostDB:ENSMUSG00000026439"/>
<dbReference type="eggNOG" id="KOG1273">
    <property type="taxonomic scope" value="Eukaryota"/>
</dbReference>
<dbReference type="GeneTree" id="ENSGT00530000064100"/>
<dbReference type="HOGENOM" id="CLU_032142_1_0_1"/>
<dbReference type="InParanoid" id="Q8BX09"/>
<dbReference type="OMA" id="DYEDDIM"/>
<dbReference type="OrthoDB" id="196858at2759"/>
<dbReference type="PhylomeDB" id="Q8BX09"/>
<dbReference type="TreeFam" id="TF313289"/>
<dbReference type="Reactome" id="R-MMU-201722">
    <property type="pathway name" value="Formation of the beta-catenin:TCF transactivating complex"/>
</dbReference>
<dbReference type="Reactome" id="R-MMU-3214841">
    <property type="pathway name" value="PKMTs methylate histone lysines"/>
</dbReference>
<dbReference type="Reactome" id="R-MMU-8936459">
    <property type="pathway name" value="RUNX1 regulates genes involved in megakaryocyte differentiation and platelet function"/>
</dbReference>
<dbReference type="Reactome" id="R-MMU-8951664">
    <property type="pathway name" value="Neddylation"/>
</dbReference>
<dbReference type="Reactome" id="R-MMU-9772755">
    <property type="pathway name" value="Formation of WDR5-containing histone-modifying complexes"/>
</dbReference>
<dbReference type="Reactome" id="R-MMU-9818564">
    <property type="pathway name" value="Epigenetic regulation of gene expression by MLL3 and MLL4 complexes"/>
</dbReference>
<dbReference type="BioGRID-ORCS" id="213464">
    <property type="hits" value="22 hits in 81 CRISPR screens"/>
</dbReference>
<dbReference type="ChiTaRS" id="Rbbp5">
    <property type="organism name" value="mouse"/>
</dbReference>
<dbReference type="EvolutionaryTrace" id="Q8BX09"/>
<dbReference type="PRO" id="PR:Q8BX09"/>
<dbReference type="Proteomes" id="UP000000589">
    <property type="component" value="Chromosome 1"/>
</dbReference>
<dbReference type="RNAct" id="Q8BX09">
    <property type="molecule type" value="protein"/>
</dbReference>
<dbReference type="Bgee" id="ENSMUSG00000026439">
    <property type="expression patterns" value="Expressed in manus and 237 other cell types or tissues"/>
</dbReference>
<dbReference type="ExpressionAtlas" id="Q8BX09">
    <property type="expression patterns" value="baseline and differential"/>
</dbReference>
<dbReference type="GO" id="GO:0035097">
    <property type="term" value="C:histone methyltransferase complex"/>
    <property type="evidence" value="ECO:0000266"/>
    <property type="project" value="MGI"/>
</dbReference>
<dbReference type="GO" id="GO:0071339">
    <property type="term" value="C:MLL1 complex"/>
    <property type="evidence" value="ECO:0000250"/>
    <property type="project" value="UniProtKB"/>
</dbReference>
<dbReference type="GO" id="GO:0044666">
    <property type="term" value="C:MLL3/4 complex"/>
    <property type="evidence" value="ECO:0007669"/>
    <property type="project" value="Ensembl"/>
</dbReference>
<dbReference type="GO" id="GO:0005730">
    <property type="term" value="C:nucleolus"/>
    <property type="evidence" value="ECO:0007669"/>
    <property type="project" value="Ensembl"/>
</dbReference>
<dbReference type="GO" id="GO:0005654">
    <property type="term" value="C:nucleoplasm"/>
    <property type="evidence" value="ECO:0000304"/>
    <property type="project" value="Reactome"/>
</dbReference>
<dbReference type="GO" id="GO:0005634">
    <property type="term" value="C:nucleus"/>
    <property type="evidence" value="ECO:0000266"/>
    <property type="project" value="MGI"/>
</dbReference>
<dbReference type="GO" id="GO:0048188">
    <property type="term" value="C:Set1C/COMPASS complex"/>
    <property type="evidence" value="ECO:0000250"/>
    <property type="project" value="UniProtKB"/>
</dbReference>
<dbReference type="GO" id="GO:0042393">
    <property type="term" value="F:histone binding"/>
    <property type="evidence" value="ECO:0007669"/>
    <property type="project" value="Ensembl"/>
</dbReference>
<dbReference type="GO" id="GO:0000976">
    <property type="term" value="F:transcription cis-regulatory region binding"/>
    <property type="evidence" value="ECO:0007669"/>
    <property type="project" value="Ensembl"/>
</dbReference>
<dbReference type="GO" id="GO:0006974">
    <property type="term" value="P:DNA damage response"/>
    <property type="evidence" value="ECO:0000266"/>
    <property type="project" value="MGI"/>
</dbReference>
<dbReference type="GO" id="GO:0043627">
    <property type="term" value="P:response to estrogen"/>
    <property type="evidence" value="ECO:0007669"/>
    <property type="project" value="Ensembl"/>
</dbReference>
<dbReference type="GO" id="GO:0045815">
    <property type="term" value="P:transcription initiation-coupled chromatin remodeling"/>
    <property type="evidence" value="ECO:0007669"/>
    <property type="project" value="Ensembl"/>
</dbReference>
<dbReference type="FunFam" id="2.130.10.10:FF:000066">
    <property type="entry name" value="retinoblastoma-binding protein 5 isoform X2"/>
    <property type="match status" value="1"/>
</dbReference>
<dbReference type="Gene3D" id="2.130.10.10">
    <property type="entry name" value="YVTN repeat-like/Quinoprotein amine dehydrogenase"/>
    <property type="match status" value="1"/>
</dbReference>
<dbReference type="IDEAL" id="IID50152"/>
<dbReference type="InterPro" id="IPR037850">
    <property type="entry name" value="RBBP5/Swd1"/>
</dbReference>
<dbReference type="InterPro" id="IPR015943">
    <property type="entry name" value="WD40/YVTN_repeat-like_dom_sf"/>
</dbReference>
<dbReference type="InterPro" id="IPR001680">
    <property type="entry name" value="WD40_rpt"/>
</dbReference>
<dbReference type="PANTHER" id="PTHR44040">
    <property type="entry name" value="RETINOBLASTOMA-BINDING PROTEIN 5"/>
    <property type="match status" value="1"/>
</dbReference>
<dbReference type="PANTHER" id="PTHR44040:SF1">
    <property type="entry name" value="RETINOBLASTOMA-BINDING PROTEIN 5"/>
    <property type="match status" value="1"/>
</dbReference>
<dbReference type="Pfam" id="PF00400">
    <property type="entry name" value="WD40"/>
    <property type="match status" value="2"/>
</dbReference>
<dbReference type="SMART" id="SM00320">
    <property type="entry name" value="WD40"/>
    <property type="match status" value="5"/>
</dbReference>
<dbReference type="SUPFAM" id="SSF117289">
    <property type="entry name" value="Nucleoporin domain"/>
    <property type="match status" value="1"/>
</dbReference>
<dbReference type="PROSITE" id="PS50082">
    <property type="entry name" value="WD_REPEATS_2"/>
    <property type="match status" value="1"/>
</dbReference>
<dbReference type="PROSITE" id="PS50294">
    <property type="entry name" value="WD_REPEATS_REGION"/>
    <property type="match status" value="1"/>
</dbReference>
<feature type="chain" id="PRO_0000390999" description="Retinoblastoma-binding protein 5" evidence="1">
    <location>
        <begin position="1"/>
        <end position="538"/>
    </location>
</feature>
<feature type="repeat" description="WD 1">
    <location>
        <begin position="22"/>
        <end position="63"/>
    </location>
</feature>
<feature type="repeat" description="WD 2">
    <location>
        <begin position="64"/>
        <end position="103"/>
    </location>
</feature>
<feature type="repeat" description="WD 3">
    <location>
        <begin position="148"/>
        <end position="188"/>
    </location>
</feature>
<feature type="repeat" description="WD 4">
    <location>
        <begin position="196"/>
        <end position="235"/>
    </location>
</feature>
<feature type="repeat" description="WD 5">
    <location>
        <begin position="249"/>
        <end position="291"/>
    </location>
</feature>
<feature type="repeat" description="WD 6">
    <location>
        <begin position="293"/>
        <end position="331"/>
    </location>
</feature>
<feature type="region of interest" description="Interaction with ASH2L" evidence="2">
    <location>
        <begin position="330"/>
        <end position="366"/>
    </location>
</feature>
<feature type="region of interest" description="Disordered" evidence="3">
    <location>
        <begin position="344"/>
        <end position="377"/>
    </location>
</feature>
<feature type="region of interest" description="Interaction with WDR5" evidence="2">
    <location>
        <begin position="371"/>
        <end position="380"/>
    </location>
</feature>
<feature type="region of interest" description="Disordered" evidence="3">
    <location>
        <begin position="408"/>
        <end position="519"/>
    </location>
</feature>
<feature type="compositionally biased region" description="Acidic residues" evidence="3">
    <location>
        <begin position="344"/>
        <end position="360"/>
    </location>
</feature>
<feature type="compositionally biased region" description="Basic residues" evidence="3">
    <location>
        <begin position="479"/>
        <end position="490"/>
    </location>
</feature>
<feature type="compositionally biased region" description="Basic and acidic residues" evidence="3">
    <location>
        <begin position="491"/>
        <end position="510"/>
    </location>
</feature>
<feature type="modified residue" description="Phosphothreonine; by CDK1" evidence="2">
    <location>
        <position position="252"/>
    </location>
</feature>
<feature type="modified residue" description="Phosphoserine" evidence="2">
    <location>
        <position position="350"/>
    </location>
</feature>
<feature type="modified residue" description="Phosphoserine" evidence="2">
    <location>
        <position position="388"/>
    </location>
</feature>
<feature type="modified residue" description="Phosphoserine" evidence="2">
    <location>
        <position position="389"/>
    </location>
</feature>
<feature type="modified residue" description="Phosphoserine; by CDK1" evidence="2">
    <location>
        <position position="497"/>
    </location>
</feature>
<feature type="modified residue" description="Phosphoserine" evidence="2">
    <location>
        <position position="525"/>
    </location>
</feature>
<feature type="cross-link" description="Glycyl lysine isopeptide (Lys-Gly) (interchain with G-Cter in SUMO2)" evidence="2">
    <location>
        <position position="129"/>
    </location>
</feature>
<feature type="splice variant" id="VSP_038671" description="In isoform 2." evidence="6">
    <location>
        <begin position="1"/>
        <end position="127"/>
    </location>
</feature>
<feature type="splice variant" id="VSP_038672" description="In isoform 2." evidence="6">
    <location>
        <begin position="492"/>
        <end position="529"/>
    </location>
</feature>
<feature type="sequence conflict" description="In Ref. 1; BAC33635." evidence="7" ref="1">
    <original>Q</original>
    <variation>K</variation>
    <location>
        <position position="243"/>
    </location>
</feature>
<feature type="sequence conflict" description="In Ref. 1; BAE42295." evidence="7" ref="1">
    <location>
        <position position="529"/>
    </location>
</feature>
<reference key="1">
    <citation type="journal article" date="2005" name="Science">
        <title>The transcriptional landscape of the mammalian genome.</title>
        <authorList>
            <person name="Carninci P."/>
            <person name="Kasukawa T."/>
            <person name="Katayama S."/>
            <person name="Gough J."/>
            <person name="Frith M.C."/>
            <person name="Maeda N."/>
            <person name="Oyama R."/>
            <person name="Ravasi T."/>
            <person name="Lenhard B."/>
            <person name="Wells C."/>
            <person name="Kodzius R."/>
            <person name="Shimokawa K."/>
            <person name="Bajic V.B."/>
            <person name="Brenner S.E."/>
            <person name="Batalov S."/>
            <person name="Forrest A.R."/>
            <person name="Zavolan M."/>
            <person name="Davis M.J."/>
            <person name="Wilming L.G."/>
            <person name="Aidinis V."/>
            <person name="Allen J.E."/>
            <person name="Ambesi-Impiombato A."/>
            <person name="Apweiler R."/>
            <person name="Aturaliya R.N."/>
            <person name="Bailey T.L."/>
            <person name="Bansal M."/>
            <person name="Baxter L."/>
            <person name="Beisel K.W."/>
            <person name="Bersano T."/>
            <person name="Bono H."/>
            <person name="Chalk A.M."/>
            <person name="Chiu K.P."/>
            <person name="Choudhary V."/>
            <person name="Christoffels A."/>
            <person name="Clutterbuck D.R."/>
            <person name="Crowe M.L."/>
            <person name="Dalla E."/>
            <person name="Dalrymple B.P."/>
            <person name="de Bono B."/>
            <person name="Della Gatta G."/>
            <person name="di Bernardo D."/>
            <person name="Down T."/>
            <person name="Engstrom P."/>
            <person name="Fagiolini M."/>
            <person name="Faulkner G."/>
            <person name="Fletcher C.F."/>
            <person name="Fukushima T."/>
            <person name="Furuno M."/>
            <person name="Futaki S."/>
            <person name="Gariboldi M."/>
            <person name="Georgii-Hemming P."/>
            <person name="Gingeras T.R."/>
            <person name="Gojobori T."/>
            <person name="Green R.E."/>
            <person name="Gustincich S."/>
            <person name="Harbers M."/>
            <person name="Hayashi Y."/>
            <person name="Hensch T.K."/>
            <person name="Hirokawa N."/>
            <person name="Hill D."/>
            <person name="Huminiecki L."/>
            <person name="Iacono M."/>
            <person name="Ikeo K."/>
            <person name="Iwama A."/>
            <person name="Ishikawa T."/>
            <person name="Jakt M."/>
            <person name="Kanapin A."/>
            <person name="Katoh M."/>
            <person name="Kawasawa Y."/>
            <person name="Kelso J."/>
            <person name="Kitamura H."/>
            <person name="Kitano H."/>
            <person name="Kollias G."/>
            <person name="Krishnan S.P."/>
            <person name="Kruger A."/>
            <person name="Kummerfeld S.K."/>
            <person name="Kurochkin I.V."/>
            <person name="Lareau L.F."/>
            <person name="Lazarevic D."/>
            <person name="Lipovich L."/>
            <person name="Liu J."/>
            <person name="Liuni S."/>
            <person name="McWilliam S."/>
            <person name="Madan Babu M."/>
            <person name="Madera M."/>
            <person name="Marchionni L."/>
            <person name="Matsuda H."/>
            <person name="Matsuzawa S."/>
            <person name="Miki H."/>
            <person name="Mignone F."/>
            <person name="Miyake S."/>
            <person name="Morris K."/>
            <person name="Mottagui-Tabar S."/>
            <person name="Mulder N."/>
            <person name="Nakano N."/>
            <person name="Nakauchi H."/>
            <person name="Ng P."/>
            <person name="Nilsson R."/>
            <person name="Nishiguchi S."/>
            <person name="Nishikawa S."/>
            <person name="Nori F."/>
            <person name="Ohara O."/>
            <person name="Okazaki Y."/>
            <person name="Orlando V."/>
            <person name="Pang K.C."/>
            <person name="Pavan W.J."/>
            <person name="Pavesi G."/>
            <person name="Pesole G."/>
            <person name="Petrovsky N."/>
            <person name="Piazza S."/>
            <person name="Reed J."/>
            <person name="Reid J.F."/>
            <person name="Ring B.Z."/>
            <person name="Ringwald M."/>
            <person name="Rost B."/>
            <person name="Ruan Y."/>
            <person name="Salzberg S.L."/>
            <person name="Sandelin A."/>
            <person name="Schneider C."/>
            <person name="Schoenbach C."/>
            <person name="Sekiguchi K."/>
            <person name="Semple C.A."/>
            <person name="Seno S."/>
            <person name="Sessa L."/>
            <person name="Sheng Y."/>
            <person name="Shibata Y."/>
            <person name="Shimada H."/>
            <person name="Shimada K."/>
            <person name="Silva D."/>
            <person name="Sinclair B."/>
            <person name="Sperling S."/>
            <person name="Stupka E."/>
            <person name="Sugiura K."/>
            <person name="Sultana R."/>
            <person name="Takenaka Y."/>
            <person name="Taki K."/>
            <person name="Tammoja K."/>
            <person name="Tan S.L."/>
            <person name="Tang S."/>
            <person name="Taylor M.S."/>
            <person name="Tegner J."/>
            <person name="Teichmann S.A."/>
            <person name="Ueda H.R."/>
            <person name="van Nimwegen E."/>
            <person name="Verardo R."/>
            <person name="Wei C.L."/>
            <person name="Yagi K."/>
            <person name="Yamanishi H."/>
            <person name="Zabarovsky E."/>
            <person name="Zhu S."/>
            <person name="Zimmer A."/>
            <person name="Hide W."/>
            <person name="Bult C."/>
            <person name="Grimmond S.M."/>
            <person name="Teasdale R.D."/>
            <person name="Liu E.T."/>
            <person name="Brusic V."/>
            <person name="Quackenbush J."/>
            <person name="Wahlestedt C."/>
            <person name="Mattick J.S."/>
            <person name="Hume D.A."/>
            <person name="Kai C."/>
            <person name="Sasaki D."/>
            <person name="Tomaru Y."/>
            <person name="Fukuda S."/>
            <person name="Kanamori-Katayama M."/>
            <person name="Suzuki M."/>
            <person name="Aoki J."/>
            <person name="Arakawa T."/>
            <person name="Iida J."/>
            <person name="Imamura K."/>
            <person name="Itoh M."/>
            <person name="Kato T."/>
            <person name="Kawaji H."/>
            <person name="Kawagashira N."/>
            <person name="Kawashima T."/>
            <person name="Kojima M."/>
            <person name="Kondo S."/>
            <person name="Konno H."/>
            <person name="Nakano K."/>
            <person name="Ninomiya N."/>
            <person name="Nishio T."/>
            <person name="Okada M."/>
            <person name="Plessy C."/>
            <person name="Shibata K."/>
            <person name="Shiraki T."/>
            <person name="Suzuki S."/>
            <person name="Tagami M."/>
            <person name="Waki K."/>
            <person name="Watahiki A."/>
            <person name="Okamura-Oho Y."/>
            <person name="Suzuki H."/>
            <person name="Kawai J."/>
            <person name="Hayashizaki Y."/>
        </authorList>
    </citation>
    <scope>NUCLEOTIDE SEQUENCE [LARGE SCALE MRNA] (ISOFORM 1)</scope>
    <source>
        <strain>C57BL/6J</strain>
        <strain>NOD</strain>
    </source>
</reference>
<reference key="2">
    <citation type="submission" date="2005-09" db="EMBL/GenBank/DDBJ databases">
        <authorList>
            <person name="Mural R.J."/>
            <person name="Adams M.D."/>
            <person name="Myers E.W."/>
            <person name="Smith H.O."/>
            <person name="Venter J.C."/>
        </authorList>
    </citation>
    <scope>NUCLEOTIDE SEQUENCE [LARGE SCALE GENOMIC DNA]</scope>
</reference>
<reference key="3">
    <citation type="journal article" date="2004" name="Genome Res.">
        <title>The status, quality, and expansion of the NIH full-length cDNA project: the Mammalian Gene Collection (MGC).</title>
        <authorList>
            <consortium name="The MGC Project Team"/>
        </authorList>
    </citation>
    <scope>NUCLEOTIDE SEQUENCE [LARGE SCALE MRNA] (ISOFORM 2)</scope>
    <source>
        <strain>C57BL/6J</strain>
        <strain>NMRI</strain>
        <tissue>Brain</tissue>
        <tissue>Mammary tumor</tissue>
    </source>
</reference>
<reference key="4">
    <citation type="journal article" date="2010" name="Cell">
        <title>A tissue-specific atlas of mouse protein phosphorylation and expression.</title>
        <authorList>
            <person name="Huttlin E.L."/>
            <person name="Jedrychowski M.P."/>
            <person name="Elias J.E."/>
            <person name="Goswami T."/>
            <person name="Rad R."/>
            <person name="Beausoleil S.A."/>
            <person name="Villen J."/>
            <person name="Haas W."/>
            <person name="Sowa M.E."/>
            <person name="Gygi S.P."/>
        </authorList>
    </citation>
    <scope>IDENTIFICATION BY MASS SPECTROMETRY [LARGE SCALE ANALYSIS]</scope>
    <source>
        <tissue>Brain</tissue>
        <tissue>Spleen</tissue>
        <tissue>Testis</tissue>
    </source>
</reference>
<reference key="5">
    <citation type="journal article" date="2011" name="Cell">
        <title>Role for Dpy-30 in ES cell-fate specification by regulation of H3K4 methylation within bivalent domains.</title>
        <authorList>
            <person name="Jiang H."/>
            <person name="Shukla A."/>
            <person name="Wang X."/>
            <person name="Chen W.Y."/>
            <person name="Bernstein B.E."/>
            <person name="Roeder R.G."/>
        </authorList>
    </citation>
    <scope>FUNCTION</scope>
    <scope>IDENTIFICATION IN A COMPLEX WITH ASH2L; DPY30; KMT2A; KMT2D AND WDR5</scope>
</reference>
<reference key="6">
    <citation type="journal article" date="2012" name="Cell">
        <title>Microcephaly gene links trithorax and REST/NRSF to control neural stem cell proliferation and differentiation.</title>
        <authorList>
            <person name="Yang Y.J."/>
            <person name="Baltus A.E."/>
            <person name="Mathew R.S."/>
            <person name="Murphy E.A."/>
            <person name="Evrony G.D."/>
            <person name="Gonzalez D.M."/>
            <person name="Wang E.P."/>
            <person name="Marshall-Walker C.A."/>
            <person name="Barry B.J."/>
            <person name="Murn J."/>
            <person name="Tatarakis A."/>
            <person name="Mahajan M.A."/>
            <person name="Samuels H.H."/>
            <person name="Shi Y."/>
            <person name="Golden J.A."/>
            <person name="Mahajnah M."/>
            <person name="Shenhav R."/>
            <person name="Walsh C.A."/>
        </authorList>
    </citation>
    <scope>INTERACTION WITH ZNF335</scope>
</reference>
<organism>
    <name type="scientific">Mus musculus</name>
    <name type="common">Mouse</name>
    <dbReference type="NCBI Taxonomy" id="10090"/>
    <lineage>
        <taxon>Eukaryota</taxon>
        <taxon>Metazoa</taxon>
        <taxon>Chordata</taxon>
        <taxon>Craniata</taxon>
        <taxon>Vertebrata</taxon>
        <taxon>Euteleostomi</taxon>
        <taxon>Mammalia</taxon>
        <taxon>Eutheria</taxon>
        <taxon>Euarchontoglires</taxon>
        <taxon>Glires</taxon>
        <taxon>Rodentia</taxon>
        <taxon>Myomorpha</taxon>
        <taxon>Muroidea</taxon>
        <taxon>Muridae</taxon>
        <taxon>Murinae</taxon>
        <taxon>Mus</taxon>
        <taxon>Mus</taxon>
    </lineage>
</organism>
<gene>
    <name type="primary">Rbbp5</name>
</gene>
<evidence type="ECO:0000250" key="1"/>
<evidence type="ECO:0000250" key="2">
    <source>
        <dbReference type="UniProtKB" id="Q15291"/>
    </source>
</evidence>
<evidence type="ECO:0000256" key="3">
    <source>
        <dbReference type="SAM" id="MobiDB-lite"/>
    </source>
</evidence>
<evidence type="ECO:0000269" key="4">
    <source>
    </source>
</evidence>
<evidence type="ECO:0000269" key="5">
    <source>
    </source>
</evidence>
<evidence type="ECO:0000303" key="6">
    <source>
    </source>
</evidence>
<evidence type="ECO:0000305" key="7"/>
<accession>Q8BX09</accession>
<accession>Q3TBL4</accession>
<accession>Q3U3G1</accession>
<accession>Q6PAP0</accession>
<accession>Q6PFC2</accession>
<comment type="function">
    <text evidence="2 4">In embryonic stem (ES) cells, plays a crucial role in the differentiation potential, particularly along the neural lineage, regulating gene induction and H3 'Lys-4' methylation at key developmental loci, including that mediated by retinoic acid (PubMed:21335234). Does not affect ES cell self-renewal (PubMed:21335234). Component or associated component of some histone methyltransferase complexes which regulates transcription through recruitment of those complexes to gene promoters (By similarity). As part of the MLL1/MLL complex, involved in mono-, di- and trimethylation at 'Lys-4' of histone H3 (By similarity). Histone H3 'Lys-4' methylation represents a specific tag for epigenetic transcriptional activation (By similarity). In association with ASH2L and WDR5, stimulates the histone methyltransferase activities of KMT2A, KMT2B, KMT2C, KMT2D, SETD1A and SETD1B (By similarity).</text>
</comment>
<comment type="subunit">
    <text evidence="2 4 5">Component of the SET1 complex, at least composed of the catalytic subunit (SETD1A or SETD1B), WDR5, WDR82, RBBP5, ASH2L/ASH2, CXXC1/CFP1, HCFC1 and DPY30 (By similarity). Core component of several methyltransferase-containing complexes including MLL1/MLL, MLL2/3 (also named ASCOM complex) and MLL4/WBP7 (By similarity). Each complex is at least composed of ASH2L, RBBP5, WDR5, DPY30, one or more specific histone methyltransferases (KMT2A/MLL1, KMT2D/MLL2, KMT2C/MLL3 and KMT2B/MLL4), and the facultative components PAGR1, BACC1, CHD8, E2F6, HCFC1, HCFC2, HSP70, INO80C, KDM6A, KANSL1, LAS1L, MAX, MCRS1, MEN1, MGA, MYST1/MOF, NCOA6, PAXIP1/PTIP, PELP1, PHF20, PRP31, RING2, RUVB1/TIP49A, RUVB2/TIP49B, SENP3, TAF1, TAF4, TAF6, TAF7, TAF9, TEX10 and alpha- and beta-tubulin (By similarity). Component of a histone methylation complex composed of at least ZNF335, RBBP5, ASH2L and WDR5; the complex may have histone H3-specific methyltransferase activity, however does not have specificity for 'Lys-4' of histone H3 (By similarity). Interacts with ZNF335 (PubMed:23178126). Interacts with ASH2L; the interaction is direct (By similarity). Interacts with WDR5; the interaction is direct (By similarity). Components of the ZNF335-RBBP5-ASH2L-WDR5 histone methylation complex may associate with components of a nuclear receptor-mediated transcription complex to form a complex at least composed of ZNF335, HCFC1, CCAR2, EMSY, MKI67, RBBP5, ASH2L and WDR5 (By similarity). Within this complex interacts with EMSY (By similarity). Found in a complex with RBBP5, ASH2L, DPY30, KMT2A, KMT2D and WDR5 (PubMed:21335234). Interacts with SETD1A (By similarity). Interacts with WDR82 (By similarity).</text>
</comment>
<comment type="interaction">
    <interactant intactId="EBI-1556543">
        <id>Q8BX09</id>
    </interactant>
    <interactant intactId="EBI-1556554">
        <id>Q91X20</id>
        <label>Ash2l</label>
    </interactant>
    <organismsDiffer>false</organismsDiffer>
    <experiments>10</experiments>
</comment>
<comment type="subcellular location">
    <subcellularLocation>
        <location evidence="1">Nucleus</location>
    </subcellularLocation>
</comment>
<comment type="alternative products">
    <event type="alternative splicing"/>
    <isoform>
        <id>Q8BX09-1</id>
        <name>1</name>
        <sequence type="displayed"/>
    </isoform>
    <isoform>
        <id>Q8BX09-2</id>
        <name>2</name>
        <sequence type="described" ref="VSP_038671 VSP_038672"/>
    </isoform>
</comment>
<protein>
    <recommendedName>
        <fullName>Retinoblastoma-binding protein 5</fullName>
        <shortName>RBBP-5</shortName>
    </recommendedName>
</protein>
<name>RBBP5_MOUSE</name>